<feature type="chain" id="PRO_1000146236" description="Adenine deaminase">
    <location>
        <begin position="1"/>
        <end position="588"/>
    </location>
</feature>
<name>ADEC_ECODH</name>
<protein>
    <recommendedName>
        <fullName evidence="1">Adenine deaminase</fullName>
        <shortName evidence="1">Adenase</shortName>
        <shortName evidence="1">Adenine aminase</shortName>
        <ecNumber evidence="1">3.5.4.2</ecNumber>
    </recommendedName>
</protein>
<comment type="catalytic activity">
    <reaction evidence="1">
        <text>adenine + H2O + H(+) = hypoxanthine + NH4(+)</text>
        <dbReference type="Rhea" id="RHEA:23688"/>
        <dbReference type="ChEBI" id="CHEBI:15377"/>
        <dbReference type="ChEBI" id="CHEBI:15378"/>
        <dbReference type="ChEBI" id="CHEBI:16708"/>
        <dbReference type="ChEBI" id="CHEBI:17368"/>
        <dbReference type="ChEBI" id="CHEBI:28938"/>
        <dbReference type="EC" id="3.5.4.2"/>
    </reaction>
</comment>
<comment type="cofactor">
    <cofactor evidence="1">
        <name>Mn(2+)</name>
        <dbReference type="ChEBI" id="CHEBI:29035"/>
    </cofactor>
</comment>
<comment type="subunit">
    <text evidence="1">Homodimer.</text>
</comment>
<comment type="similarity">
    <text evidence="1">Belongs to the metallo-dependent hydrolases superfamily. Adenine deaminase family.</text>
</comment>
<dbReference type="EC" id="3.5.4.2" evidence="1"/>
<dbReference type="EMBL" id="CP000948">
    <property type="protein sequence ID" value="ACB04714.1"/>
    <property type="molecule type" value="Genomic_DNA"/>
</dbReference>
<dbReference type="SMR" id="B1X998"/>
<dbReference type="KEGG" id="ecd:ECDH10B_3848"/>
<dbReference type="HOGENOM" id="CLU_027935_0_0_6"/>
<dbReference type="GO" id="GO:0000034">
    <property type="term" value="F:adenine deaminase activity"/>
    <property type="evidence" value="ECO:0007669"/>
    <property type="project" value="UniProtKB-UniRule"/>
</dbReference>
<dbReference type="GO" id="GO:0006146">
    <property type="term" value="P:adenine catabolic process"/>
    <property type="evidence" value="ECO:0007669"/>
    <property type="project" value="InterPro"/>
</dbReference>
<dbReference type="CDD" id="cd01295">
    <property type="entry name" value="AdeC"/>
    <property type="match status" value="1"/>
</dbReference>
<dbReference type="FunFam" id="3.20.20.140:FF:000016">
    <property type="entry name" value="Adenine deaminase"/>
    <property type="match status" value="1"/>
</dbReference>
<dbReference type="Gene3D" id="3.20.20.140">
    <property type="entry name" value="Metal-dependent hydrolases"/>
    <property type="match status" value="1"/>
</dbReference>
<dbReference type="Gene3D" id="2.30.40.10">
    <property type="entry name" value="Urease, subunit C, domain 1"/>
    <property type="match status" value="1"/>
</dbReference>
<dbReference type="HAMAP" id="MF_01518">
    <property type="entry name" value="Adenine_deamin"/>
    <property type="match status" value="1"/>
</dbReference>
<dbReference type="InterPro" id="IPR006679">
    <property type="entry name" value="Adenine_deam"/>
</dbReference>
<dbReference type="InterPro" id="IPR026912">
    <property type="entry name" value="Adenine_deam_C"/>
</dbReference>
<dbReference type="InterPro" id="IPR006680">
    <property type="entry name" value="Amidohydro-rel"/>
</dbReference>
<dbReference type="InterPro" id="IPR011059">
    <property type="entry name" value="Metal-dep_hydrolase_composite"/>
</dbReference>
<dbReference type="InterPro" id="IPR032466">
    <property type="entry name" value="Metal_Hydrolase"/>
</dbReference>
<dbReference type="NCBIfam" id="TIGR01178">
    <property type="entry name" value="ade"/>
    <property type="match status" value="1"/>
</dbReference>
<dbReference type="NCBIfam" id="NF007457">
    <property type="entry name" value="PRK10027.1"/>
    <property type="match status" value="1"/>
</dbReference>
<dbReference type="PANTHER" id="PTHR11113:SF2">
    <property type="entry name" value="ADENINE DEAMINASE"/>
    <property type="match status" value="1"/>
</dbReference>
<dbReference type="PANTHER" id="PTHR11113">
    <property type="entry name" value="N-ACETYLGLUCOSAMINE-6-PHOSPHATE DEACETYLASE"/>
    <property type="match status" value="1"/>
</dbReference>
<dbReference type="Pfam" id="PF13382">
    <property type="entry name" value="Adenine_deam_C"/>
    <property type="match status" value="1"/>
</dbReference>
<dbReference type="Pfam" id="PF01979">
    <property type="entry name" value="Amidohydro_1"/>
    <property type="match status" value="1"/>
</dbReference>
<dbReference type="SUPFAM" id="SSF51338">
    <property type="entry name" value="Composite domain of metallo-dependent hydrolases"/>
    <property type="match status" value="1"/>
</dbReference>
<dbReference type="SUPFAM" id="SSF51556">
    <property type="entry name" value="Metallo-dependent hydrolases"/>
    <property type="match status" value="1"/>
</dbReference>
<sequence length="588" mass="63739">MNNSINHKFHHISRAEYQELLAVSRGDAVADYIIDNVSILDLINGGEISGPIVIKGRYIAGVGAEYTDAPALQRIDARGATAVPGFIDAHLHIESSMMTPVTFETATLPRGLTTVICDPHEIVNVMGEAGFAWFARCAEQARQNQYLQVSSCVPALEGCDVNGASFTLEQMLAWRDHPQVTGLAEMMDYPGVISGQNALLDKLDAFRHLTLDGHCPGLGGKELNAYITAGIENCHESYQLEEGRRKLQLGMSLMIREGSAARNLNALAPLINEFNSPQCMLCTDDRNPWEIAHEGHIDALIRRLIEQHNVPLHVAYRVASWSTARHFGLNHLGLLAPGKQADIVLLSDARKVTVQQVLVKGEPIDAQTLQAEESARLAQSAPPYGNTIARQPVSASDFALQFTPGKRYRVIDVIHNELITHSHSSVYSENGFDRDDVSFIAVLERYGQRLAPACGLLGGFGLNEGALAATVSHDSHNIVVIGRSAEEMALAVNQVIQDGGGLCVVRNGQVQSHLPLPIAGLMSTDTAQSLAEQIDALKAAARECGPLPDEPFIQMAFLSLPVIPALKLTSQGLFDGEKFAFTTLEVTE</sequence>
<organism>
    <name type="scientific">Escherichia coli (strain K12 / DH10B)</name>
    <dbReference type="NCBI Taxonomy" id="316385"/>
    <lineage>
        <taxon>Bacteria</taxon>
        <taxon>Pseudomonadati</taxon>
        <taxon>Pseudomonadota</taxon>
        <taxon>Gammaproteobacteria</taxon>
        <taxon>Enterobacterales</taxon>
        <taxon>Enterobacteriaceae</taxon>
        <taxon>Escherichia</taxon>
    </lineage>
</organism>
<accession>B1X998</accession>
<proteinExistence type="inferred from homology"/>
<keyword id="KW-0378">Hydrolase</keyword>
<keyword id="KW-0464">Manganese</keyword>
<gene>
    <name evidence="1" type="primary">ade</name>
    <name type="ordered locus">ECDH10B_3848</name>
</gene>
<evidence type="ECO:0000255" key="1">
    <source>
        <dbReference type="HAMAP-Rule" id="MF_01518"/>
    </source>
</evidence>
<reference key="1">
    <citation type="journal article" date="2008" name="J. Bacteriol.">
        <title>The complete genome sequence of Escherichia coli DH10B: insights into the biology of a laboratory workhorse.</title>
        <authorList>
            <person name="Durfee T."/>
            <person name="Nelson R."/>
            <person name="Baldwin S."/>
            <person name="Plunkett G. III"/>
            <person name="Burland V."/>
            <person name="Mau B."/>
            <person name="Petrosino J.F."/>
            <person name="Qin X."/>
            <person name="Muzny D.M."/>
            <person name="Ayele M."/>
            <person name="Gibbs R.A."/>
            <person name="Csorgo B."/>
            <person name="Posfai G."/>
            <person name="Weinstock G.M."/>
            <person name="Blattner F.R."/>
        </authorList>
    </citation>
    <scope>NUCLEOTIDE SEQUENCE [LARGE SCALE GENOMIC DNA]</scope>
    <source>
        <strain>K12 / DH10B</strain>
    </source>
</reference>